<feature type="chain" id="PRO_0000118203" description="NAD(P)H-quinone oxidoreductase subunit 5, chloroplastic">
    <location>
        <begin position="1"/>
        <end position="738"/>
    </location>
</feature>
<feature type="transmembrane region" description="Helical" evidence="2">
    <location>
        <begin position="9"/>
        <end position="29"/>
    </location>
</feature>
<feature type="transmembrane region" description="Helical" evidence="2">
    <location>
        <begin position="39"/>
        <end position="59"/>
    </location>
</feature>
<feature type="transmembrane region" description="Helical" evidence="2">
    <location>
        <begin position="89"/>
        <end position="109"/>
    </location>
</feature>
<feature type="transmembrane region" description="Helical" evidence="2">
    <location>
        <begin position="125"/>
        <end position="145"/>
    </location>
</feature>
<feature type="transmembrane region" description="Helical" evidence="2">
    <location>
        <begin position="147"/>
        <end position="167"/>
    </location>
</feature>
<feature type="transmembrane region" description="Helical" evidence="2">
    <location>
        <begin position="185"/>
        <end position="205"/>
    </location>
</feature>
<feature type="transmembrane region" description="Helical" evidence="2">
    <location>
        <begin position="219"/>
        <end position="239"/>
    </location>
</feature>
<feature type="transmembrane region" description="Helical" evidence="2">
    <location>
        <begin position="258"/>
        <end position="278"/>
    </location>
</feature>
<feature type="transmembrane region" description="Helical" evidence="2">
    <location>
        <begin position="280"/>
        <end position="300"/>
    </location>
</feature>
<feature type="transmembrane region" description="Helical" evidence="2">
    <location>
        <begin position="327"/>
        <end position="347"/>
    </location>
</feature>
<feature type="transmembrane region" description="Helical" evidence="2">
    <location>
        <begin position="354"/>
        <end position="374"/>
    </location>
</feature>
<feature type="transmembrane region" description="Helical" evidence="2">
    <location>
        <begin position="396"/>
        <end position="416"/>
    </location>
</feature>
<feature type="transmembrane region" description="Helical" evidence="2">
    <location>
        <begin position="425"/>
        <end position="445"/>
    </location>
</feature>
<feature type="transmembrane region" description="Helical" evidence="2">
    <location>
        <begin position="542"/>
        <end position="562"/>
    </location>
</feature>
<feature type="transmembrane region" description="Helical" evidence="2">
    <location>
        <begin position="610"/>
        <end position="630"/>
    </location>
</feature>
<feature type="transmembrane region" description="Helical" evidence="2">
    <location>
        <begin position="691"/>
        <end position="711"/>
    </location>
</feature>
<feature type="transmembrane region" description="Helical" evidence="2">
    <location>
        <begin position="717"/>
        <end position="737"/>
    </location>
</feature>
<feature type="sequence conflict" description="In Ref. 1; AAA64699." evidence="3" ref="1">
    <original>E</original>
    <variation>G</variation>
    <location>
        <position position="710"/>
    </location>
</feature>
<dbReference type="EC" id="7.1.1.-"/>
<dbReference type="EMBL" id="EF115542">
    <property type="protein sequence ID" value="ABK79543.1"/>
    <property type="molecule type" value="Genomic_DNA"/>
</dbReference>
<dbReference type="EMBL" id="U21981">
    <property type="protein sequence ID" value="AAA64699.1"/>
    <property type="molecule type" value="Genomic_DNA"/>
</dbReference>
<dbReference type="RefSeq" id="YP_899454.1">
    <property type="nucleotide sequence ID" value="NC_008602.1"/>
</dbReference>
<dbReference type="SMR" id="Q33066"/>
<dbReference type="FunCoup" id="Q33066">
    <property type="interactions" value="2"/>
</dbReference>
<dbReference type="STRING" id="4558.Q33066"/>
<dbReference type="GeneID" id="4549148"/>
<dbReference type="KEGG" id="sbi:4549148"/>
<dbReference type="InParanoid" id="Q33066"/>
<dbReference type="OrthoDB" id="1890356at2759"/>
<dbReference type="Proteomes" id="UP000000768">
    <property type="component" value="Chloroplast"/>
</dbReference>
<dbReference type="GO" id="GO:0009535">
    <property type="term" value="C:chloroplast thylakoid membrane"/>
    <property type="evidence" value="ECO:0007669"/>
    <property type="project" value="UniProtKB-SubCell"/>
</dbReference>
<dbReference type="GO" id="GO:0008137">
    <property type="term" value="F:NADH dehydrogenase (ubiquinone) activity"/>
    <property type="evidence" value="ECO:0007669"/>
    <property type="project" value="InterPro"/>
</dbReference>
<dbReference type="GO" id="GO:0048038">
    <property type="term" value="F:quinone binding"/>
    <property type="evidence" value="ECO:0007669"/>
    <property type="project" value="UniProtKB-KW"/>
</dbReference>
<dbReference type="GO" id="GO:0042773">
    <property type="term" value="P:ATP synthesis coupled electron transport"/>
    <property type="evidence" value="ECO:0007669"/>
    <property type="project" value="InterPro"/>
</dbReference>
<dbReference type="GO" id="GO:0015990">
    <property type="term" value="P:electron transport coupled proton transport"/>
    <property type="evidence" value="ECO:0000318"/>
    <property type="project" value="GO_Central"/>
</dbReference>
<dbReference type="Gene3D" id="1.20.5.2700">
    <property type="match status" value="1"/>
</dbReference>
<dbReference type="InterPro" id="IPR002128">
    <property type="entry name" value="NADH_UbQ_OxRdtase_chlpt_su5_C"/>
</dbReference>
<dbReference type="InterPro" id="IPR018393">
    <property type="entry name" value="NADHpl_OxRdtase_5_subgr"/>
</dbReference>
<dbReference type="InterPro" id="IPR001750">
    <property type="entry name" value="ND/Mrp_TM"/>
</dbReference>
<dbReference type="InterPro" id="IPR003945">
    <property type="entry name" value="NU5C-like"/>
</dbReference>
<dbReference type="InterPro" id="IPR001516">
    <property type="entry name" value="Proton_antipo_N"/>
</dbReference>
<dbReference type="NCBIfam" id="TIGR01974">
    <property type="entry name" value="NDH_I_L"/>
    <property type="match status" value="1"/>
</dbReference>
<dbReference type="NCBIfam" id="NF005141">
    <property type="entry name" value="PRK06590.1"/>
    <property type="match status" value="1"/>
</dbReference>
<dbReference type="PANTHER" id="PTHR42829">
    <property type="entry name" value="NADH-UBIQUINONE OXIDOREDUCTASE CHAIN 5"/>
    <property type="match status" value="1"/>
</dbReference>
<dbReference type="PANTHER" id="PTHR42829:SF2">
    <property type="entry name" value="NADH-UBIQUINONE OXIDOREDUCTASE CHAIN 5"/>
    <property type="match status" value="1"/>
</dbReference>
<dbReference type="Pfam" id="PF01010">
    <property type="entry name" value="Proton_antipo_C"/>
    <property type="match status" value="1"/>
</dbReference>
<dbReference type="Pfam" id="PF00361">
    <property type="entry name" value="Proton_antipo_M"/>
    <property type="match status" value="1"/>
</dbReference>
<dbReference type="Pfam" id="PF00662">
    <property type="entry name" value="Proton_antipo_N"/>
    <property type="match status" value="1"/>
</dbReference>
<dbReference type="PRINTS" id="PR01434">
    <property type="entry name" value="NADHDHGNASE5"/>
</dbReference>
<dbReference type="PRINTS" id="PR01435">
    <property type="entry name" value="NPOXDRDTASE5"/>
</dbReference>
<proteinExistence type="inferred from homology"/>
<protein>
    <recommendedName>
        <fullName>NAD(P)H-quinone oxidoreductase subunit 5, chloroplastic</fullName>
        <ecNumber>7.1.1.-</ecNumber>
    </recommendedName>
    <alternativeName>
        <fullName>NAD(P)H dehydrogenase subunit 5</fullName>
    </alternativeName>
    <alternativeName>
        <fullName>NADH-plastoquinone oxidoreductase subunit 5</fullName>
    </alternativeName>
</protein>
<accession>Q33066</accession>
<accession>A1E9X1</accession>
<geneLocation type="chloroplast"/>
<gene>
    <name type="primary">ndhF</name>
</gene>
<evidence type="ECO:0000250" key="1"/>
<evidence type="ECO:0000255" key="2"/>
<evidence type="ECO:0000305" key="3"/>
<organism>
    <name type="scientific">Sorghum bicolor</name>
    <name type="common">Sorghum</name>
    <name type="synonym">Sorghum vulgare</name>
    <dbReference type="NCBI Taxonomy" id="4558"/>
    <lineage>
        <taxon>Eukaryota</taxon>
        <taxon>Viridiplantae</taxon>
        <taxon>Streptophyta</taxon>
        <taxon>Embryophyta</taxon>
        <taxon>Tracheophyta</taxon>
        <taxon>Spermatophyta</taxon>
        <taxon>Magnoliopsida</taxon>
        <taxon>Liliopsida</taxon>
        <taxon>Poales</taxon>
        <taxon>Poaceae</taxon>
        <taxon>PACMAD clade</taxon>
        <taxon>Panicoideae</taxon>
        <taxon>Andropogonodae</taxon>
        <taxon>Andropogoneae</taxon>
        <taxon>Sorghinae</taxon>
        <taxon>Sorghum</taxon>
    </lineage>
</organism>
<sequence>MEHTYQYAWVIPLLPLPVIMSMGFGLFLIPTATKNLRRIWAFPSILLLSIAMVFSLHLSIQQINGSSIYQYLWSWTINNDFSLEFGYLVDPLTSIMLILITTVGILVLIYSDDYMSHDEGYLRFFVYISFFNTSMLGLVTSSNLIQIYFFWELVGMCSYLLIGFWFTRPIAASACQKAFVTNRVGDFGLLLGILGFFWITGSLEFRDLFKIANNWIPNNGINSLLTTLCAFLLFLGAVAKSAQFPLHVWLPDAMEGPTPISALIHAATMVAAGIFLLARLLPLFISLPLIMSFISLVGTITLFLGATLALAQRDIKRSLAYSTMSQLGYMMLALGIGSYQAALFHLITHAYSKALLFLGSGSVIHSMEPLVGYSPDKSQNMVLMGGLRKYVPITRTTFLCGTLSLCGIPPLACFWSKDEILSNSWLYSPFFGIIASFTAGLTAFYMFRIYLLTFDGYLRVNFQNYSSTKEGSLYSISLWGKSISKGVNRDFVLSTMKSGVSFFSQNIPKIPANTRNKIGSFSTPFGAKKTFVYPHETGNTMLFPLLILLLFTLFIGSIGIPFDNGVKDNRILELTILSKWLTPSINLFQENSNSSINSYEFLTNAISSVSLAIFGLFIAYIFYGSAYSFFQNLNFQNSLVKKNPKKSFLDEVKKKIYSWSYNRGYIDFFYTRVFILGIRRLAELTHFFDKGVIDGIINGVGLAGFCIGEEIKYVGGGRISSYLFFFLCYVSLFLFFIP</sequence>
<comment type="function">
    <text evidence="1">NDH shuttles electrons from NAD(P)H:plastoquinone, via FMN and iron-sulfur (Fe-S) centers, to quinones in the photosynthetic chain and possibly in a chloroplast respiratory chain. The immediate electron acceptor for the enzyme in this species is believed to be plastoquinone. Couples the redox reaction to proton translocation, and thus conserves the redox energy in a proton gradient (By similarity).</text>
</comment>
<comment type="catalytic activity">
    <reaction>
        <text>a plastoquinone + NADH + (n+1) H(+)(in) = a plastoquinol + NAD(+) + n H(+)(out)</text>
        <dbReference type="Rhea" id="RHEA:42608"/>
        <dbReference type="Rhea" id="RHEA-COMP:9561"/>
        <dbReference type="Rhea" id="RHEA-COMP:9562"/>
        <dbReference type="ChEBI" id="CHEBI:15378"/>
        <dbReference type="ChEBI" id="CHEBI:17757"/>
        <dbReference type="ChEBI" id="CHEBI:57540"/>
        <dbReference type="ChEBI" id="CHEBI:57945"/>
        <dbReference type="ChEBI" id="CHEBI:62192"/>
    </reaction>
</comment>
<comment type="catalytic activity">
    <reaction>
        <text>a plastoquinone + NADPH + (n+1) H(+)(in) = a plastoquinol + NADP(+) + n H(+)(out)</text>
        <dbReference type="Rhea" id="RHEA:42612"/>
        <dbReference type="Rhea" id="RHEA-COMP:9561"/>
        <dbReference type="Rhea" id="RHEA-COMP:9562"/>
        <dbReference type="ChEBI" id="CHEBI:15378"/>
        <dbReference type="ChEBI" id="CHEBI:17757"/>
        <dbReference type="ChEBI" id="CHEBI:57783"/>
        <dbReference type="ChEBI" id="CHEBI:58349"/>
        <dbReference type="ChEBI" id="CHEBI:62192"/>
    </reaction>
</comment>
<comment type="subunit">
    <text evidence="1">NDH is composed of at least 16 different subunits, 5 of which are encoded in the nucleus.</text>
</comment>
<comment type="subcellular location">
    <subcellularLocation>
        <location evidence="1">Plastid</location>
        <location evidence="1">Chloroplast thylakoid membrane</location>
        <topology evidence="1">Multi-pass membrane protein</topology>
    </subcellularLocation>
</comment>
<comment type="similarity">
    <text evidence="3">Belongs to the complex I subunit 5 family.</text>
</comment>
<reference key="1">
    <citation type="journal article" date="2007" name="Theor. Appl. Genet.">
        <title>Complete chloroplast genome sequences of Hordeum vulgare, Sorghum bicolor and Agrostis stolonifera, and comparative analyses with other grass genomes.</title>
        <authorList>
            <person name="Saski C."/>
            <person name="Lee S.-B."/>
            <person name="Fjellheim S."/>
            <person name="Guda C."/>
            <person name="Jansen R.K."/>
            <person name="Luo H."/>
            <person name="Tomkins J."/>
            <person name="Rognli O.A."/>
            <person name="Daniell H."/>
            <person name="Clarke J.L."/>
        </authorList>
    </citation>
    <scope>NUCLEOTIDE SEQUENCE [LARGE SCALE GENOMIC DNA]</scope>
    <source>
        <strain>cv. BTx623</strain>
    </source>
</reference>
<reference key="2">
    <citation type="journal article" date="1995" name="Syst. Bot.">
        <title>A phylogeny of the grass family (Poaceae) based on ndhF sequence data.</title>
        <authorList>
            <person name="Clark L.G."/>
            <person name="Zhang W."/>
            <person name="Wendel J.F."/>
        </authorList>
        <dbReference type="AGRICOLA" id="IND20522020"/>
    </citation>
    <scope>NUCLEOTIDE SEQUENCE [GENOMIC DNA] OF 9-710</scope>
    <source>
        <tissue>Leaf</tissue>
    </source>
</reference>
<name>NU5C_SORBI</name>
<keyword id="KW-0150">Chloroplast</keyword>
<keyword id="KW-0472">Membrane</keyword>
<keyword id="KW-0520">NAD</keyword>
<keyword id="KW-0521">NADP</keyword>
<keyword id="KW-0934">Plastid</keyword>
<keyword id="KW-0618">Plastoquinone</keyword>
<keyword id="KW-0874">Quinone</keyword>
<keyword id="KW-1185">Reference proteome</keyword>
<keyword id="KW-0793">Thylakoid</keyword>
<keyword id="KW-1278">Translocase</keyword>
<keyword id="KW-0812">Transmembrane</keyword>
<keyword id="KW-1133">Transmembrane helix</keyword>
<keyword id="KW-0813">Transport</keyword>